<proteinExistence type="inferred from homology"/>
<gene>
    <name evidence="1" type="primary">rplF</name>
    <name type="ordered locus">CTLon_0771</name>
</gene>
<feature type="chain" id="PRO_1000143962" description="Large ribosomal subunit protein uL6">
    <location>
        <begin position="1"/>
        <end position="183"/>
    </location>
</feature>
<sequence>MSRKARDPIVLPQGVEVSIQNDEISVKGPKGSLTQVLAKEVEIAVKGNEVFVAPAAHVVDRPGRMQGLYWALIANMVKGVHTGFEKRLEMIGVGFRAAVQGSLLDLSIGVSHPTKMPIPTGLEVSVEKNTLISIKGINKQLVGEFAACVRAKRPPEPYKGKGIRYENEYVRRKAGKAAKTGKK</sequence>
<dbReference type="EMBL" id="AM884177">
    <property type="protein sequence ID" value="CAP07168.1"/>
    <property type="molecule type" value="Genomic_DNA"/>
</dbReference>
<dbReference type="RefSeq" id="WP_009873869.1">
    <property type="nucleotide sequence ID" value="NC_010280.2"/>
</dbReference>
<dbReference type="SMR" id="B0BCF3"/>
<dbReference type="KEGG" id="ctl:CTLon_0771"/>
<dbReference type="HOGENOM" id="CLU_065464_1_2_0"/>
<dbReference type="Proteomes" id="UP001154401">
    <property type="component" value="Chromosome"/>
</dbReference>
<dbReference type="GO" id="GO:0022625">
    <property type="term" value="C:cytosolic large ribosomal subunit"/>
    <property type="evidence" value="ECO:0007669"/>
    <property type="project" value="TreeGrafter"/>
</dbReference>
<dbReference type="GO" id="GO:0019843">
    <property type="term" value="F:rRNA binding"/>
    <property type="evidence" value="ECO:0007669"/>
    <property type="project" value="UniProtKB-UniRule"/>
</dbReference>
<dbReference type="GO" id="GO:0003735">
    <property type="term" value="F:structural constituent of ribosome"/>
    <property type="evidence" value="ECO:0007669"/>
    <property type="project" value="InterPro"/>
</dbReference>
<dbReference type="GO" id="GO:0002181">
    <property type="term" value="P:cytoplasmic translation"/>
    <property type="evidence" value="ECO:0007669"/>
    <property type="project" value="TreeGrafter"/>
</dbReference>
<dbReference type="FunFam" id="3.90.930.12:FF:000001">
    <property type="entry name" value="50S ribosomal protein L6"/>
    <property type="match status" value="1"/>
</dbReference>
<dbReference type="Gene3D" id="3.90.930.12">
    <property type="entry name" value="Ribosomal protein L6, alpha-beta domain"/>
    <property type="match status" value="2"/>
</dbReference>
<dbReference type="HAMAP" id="MF_01365_B">
    <property type="entry name" value="Ribosomal_uL6_B"/>
    <property type="match status" value="1"/>
</dbReference>
<dbReference type="InterPro" id="IPR000702">
    <property type="entry name" value="Ribosomal_uL6-like"/>
</dbReference>
<dbReference type="InterPro" id="IPR036789">
    <property type="entry name" value="Ribosomal_uL6-like_a/b-dom_sf"/>
</dbReference>
<dbReference type="InterPro" id="IPR020040">
    <property type="entry name" value="Ribosomal_uL6_a/b-dom"/>
</dbReference>
<dbReference type="InterPro" id="IPR019906">
    <property type="entry name" value="Ribosomal_uL6_bac-type"/>
</dbReference>
<dbReference type="InterPro" id="IPR002358">
    <property type="entry name" value="Ribosomal_uL6_CS"/>
</dbReference>
<dbReference type="NCBIfam" id="TIGR03654">
    <property type="entry name" value="L6_bact"/>
    <property type="match status" value="1"/>
</dbReference>
<dbReference type="PANTHER" id="PTHR11655">
    <property type="entry name" value="60S/50S RIBOSOMAL PROTEIN L6/L9"/>
    <property type="match status" value="1"/>
</dbReference>
<dbReference type="PANTHER" id="PTHR11655:SF14">
    <property type="entry name" value="LARGE RIBOSOMAL SUBUNIT PROTEIN UL6M"/>
    <property type="match status" value="1"/>
</dbReference>
<dbReference type="Pfam" id="PF00347">
    <property type="entry name" value="Ribosomal_L6"/>
    <property type="match status" value="2"/>
</dbReference>
<dbReference type="PIRSF" id="PIRSF002162">
    <property type="entry name" value="Ribosomal_L6"/>
    <property type="match status" value="1"/>
</dbReference>
<dbReference type="PRINTS" id="PR00059">
    <property type="entry name" value="RIBOSOMALL6"/>
</dbReference>
<dbReference type="SUPFAM" id="SSF56053">
    <property type="entry name" value="Ribosomal protein L6"/>
    <property type="match status" value="2"/>
</dbReference>
<dbReference type="PROSITE" id="PS00525">
    <property type="entry name" value="RIBOSOMAL_L6_1"/>
    <property type="match status" value="1"/>
</dbReference>
<accession>B0BCF3</accession>
<protein>
    <recommendedName>
        <fullName evidence="1">Large ribosomal subunit protein uL6</fullName>
    </recommendedName>
    <alternativeName>
        <fullName evidence="2">50S ribosomal protein L6</fullName>
    </alternativeName>
</protein>
<name>RL6_CHLTB</name>
<evidence type="ECO:0000255" key="1">
    <source>
        <dbReference type="HAMAP-Rule" id="MF_01365"/>
    </source>
</evidence>
<evidence type="ECO:0000305" key="2"/>
<organism>
    <name type="scientific">Chlamydia trachomatis serovar L2b (strain UCH-1/proctitis)</name>
    <dbReference type="NCBI Taxonomy" id="471473"/>
    <lineage>
        <taxon>Bacteria</taxon>
        <taxon>Pseudomonadati</taxon>
        <taxon>Chlamydiota</taxon>
        <taxon>Chlamydiia</taxon>
        <taxon>Chlamydiales</taxon>
        <taxon>Chlamydiaceae</taxon>
        <taxon>Chlamydia/Chlamydophila group</taxon>
        <taxon>Chlamydia</taxon>
    </lineage>
</organism>
<keyword id="KW-0687">Ribonucleoprotein</keyword>
<keyword id="KW-0689">Ribosomal protein</keyword>
<keyword id="KW-0694">RNA-binding</keyword>
<keyword id="KW-0699">rRNA-binding</keyword>
<comment type="function">
    <text evidence="1">This protein binds to the 23S rRNA, and is important in its secondary structure. It is located near the subunit interface in the base of the L7/L12 stalk, and near the tRNA binding site of the peptidyltransferase center.</text>
</comment>
<comment type="subunit">
    <text evidence="1">Part of the 50S ribosomal subunit.</text>
</comment>
<comment type="similarity">
    <text evidence="1">Belongs to the universal ribosomal protein uL6 family.</text>
</comment>
<reference key="1">
    <citation type="journal article" date="2008" name="Genome Res.">
        <title>Chlamydia trachomatis: genome sequence analysis of lymphogranuloma venereum isolates.</title>
        <authorList>
            <person name="Thomson N.R."/>
            <person name="Holden M.T.G."/>
            <person name="Carder C."/>
            <person name="Lennard N."/>
            <person name="Lockey S.J."/>
            <person name="Marsh P."/>
            <person name="Skipp P."/>
            <person name="O'Connor C.D."/>
            <person name="Goodhead I."/>
            <person name="Norbertzcak H."/>
            <person name="Harris B."/>
            <person name="Ormond D."/>
            <person name="Rance R."/>
            <person name="Quail M.A."/>
            <person name="Parkhill J."/>
            <person name="Stephens R.S."/>
            <person name="Clarke I.N."/>
        </authorList>
    </citation>
    <scope>NUCLEOTIDE SEQUENCE [LARGE SCALE GENOMIC DNA]</scope>
    <source>
        <strain>UCH-1/proctitis</strain>
    </source>
</reference>